<sequence>MSEQLPVAVATETKAERKKPKKKSWIKKLSPLFWVTVIIPTVISLVYFGFFASDRFTSQSSFVVRSPKSQSSLNGLGAILQGTGFARAQDDIYTVGEYMRSRSSLDELRKILPVREFYETKGDAFSRFNGFGFRGEEEAFYQYYKNQVMINFDTVSGISTLNVTSFDALESKKINEALLKQGEALINQLNDRARADTVRYAEEVVKTAAERVKEASQNLTDYRIANGVFDLKAQSEVQMGLVSKLQDELIVIQTQLDQVKAVTPENPQIPGLQAREQSLRKEIDQQLRAISGGGHSSLSNQAAEYQRVYLENQLAEQQLAAAMTSLESAKVEADRQQLYLEVISQPSLPDLAHEPKRLYNIVATLIIGLMVYGILSLLTASIREHKN</sequence>
<dbReference type="EMBL" id="M57677">
    <property type="protein sequence ID" value="AAA25451.1"/>
    <property type="molecule type" value="Genomic_DNA"/>
</dbReference>
<dbReference type="EMBL" id="AE002098">
    <property type="protein sequence ID" value="AAF40539.1"/>
    <property type="molecule type" value="Genomic_DNA"/>
</dbReference>
<dbReference type="PIR" id="S15221">
    <property type="entry name" value="S15221"/>
</dbReference>
<dbReference type="RefSeq" id="NP_273136.1">
    <property type="nucleotide sequence ID" value="NC_003112.2"/>
</dbReference>
<dbReference type="RefSeq" id="WP_002215287.1">
    <property type="nucleotide sequence ID" value="NC_003112.2"/>
</dbReference>
<dbReference type="SMR" id="P32014"/>
<dbReference type="STRING" id="122586.NMB0072"/>
<dbReference type="TCDB" id="8.A.4.2.1">
    <property type="family name" value="the cytoplasmic membrane-periplasmic auxiliary-2 (mpa2) family"/>
</dbReference>
<dbReference type="PaxDb" id="122586-NMB0072"/>
<dbReference type="KEGG" id="nme:NMB0072"/>
<dbReference type="PATRIC" id="fig|122586.8.peg.106"/>
<dbReference type="HOGENOM" id="CLU_027864_0_1_4"/>
<dbReference type="InParanoid" id="P32014"/>
<dbReference type="OrthoDB" id="5497849at2"/>
<dbReference type="Proteomes" id="UP000000425">
    <property type="component" value="Chromosome"/>
</dbReference>
<dbReference type="GO" id="GO:0009276">
    <property type="term" value="C:Gram-negative-bacterium-type cell wall"/>
    <property type="evidence" value="ECO:0007669"/>
    <property type="project" value="InterPro"/>
</dbReference>
<dbReference type="GO" id="GO:0005886">
    <property type="term" value="C:plasma membrane"/>
    <property type="evidence" value="ECO:0000318"/>
    <property type="project" value="GO_Central"/>
</dbReference>
<dbReference type="GO" id="GO:0005351">
    <property type="term" value="F:carbohydrate:proton symporter activity"/>
    <property type="evidence" value="ECO:0007669"/>
    <property type="project" value="InterPro"/>
</dbReference>
<dbReference type="GO" id="GO:0004713">
    <property type="term" value="F:protein tyrosine kinase activity"/>
    <property type="evidence" value="ECO:0000318"/>
    <property type="project" value="GO_Central"/>
</dbReference>
<dbReference type="GO" id="GO:0015774">
    <property type="term" value="P:polysaccharide transport"/>
    <property type="evidence" value="ECO:0007669"/>
    <property type="project" value="UniProtKB-KW"/>
</dbReference>
<dbReference type="InterPro" id="IPR050445">
    <property type="entry name" value="Bact_polysacc_biosynth/exp"/>
</dbReference>
<dbReference type="InterPro" id="IPR005705">
    <property type="entry name" value="BexC_CtrB_KpsE_VexD"/>
</dbReference>
<dbReference type="NCBIfam" id="TIGR01010">
    <property type="entry name" value="BexC_CtrB_KpsE"/>
    <property type="match status" value="1"/>
</dbReference>
<dbReference type="PANTHER" id="PTHR32309:SF13">
    <property type="entry name" value="FERRIC ENTEROBACTIN TRANSPORT PROTEIN FEPE"/>
    <property type="match status" value="1"/>
</dbReference>
<dbReference type="PANTHER" id="PTHR32309">
    <property type="entry name" value="TYROSINE-PROTEIN KINASE"/>
    <property type="match status" value="1"/>
</dbReference>
<name>CTRB_NEIMB</name>
<evidence type="ECO:0000255" key="1"/>
<evidence type="ECO:0000305" key="2"/>
<protein>
    <recommendedName>
        <fullName>Capsule polysaccharide export inner-membrane protein CtrB</fullName>
    </recommendedName>
</protein>
<accession>P32014</accession>
<gene>
    <name type="primary">ctrB</name>
    <name type="ordered locus">NMB0072</name>
</gene>
<organism>
    <name type="scientific">Neisseria meningitidis serogroup B (strain ATCC BAA-335 / MC58)</name>
    <dbReference type="NCBI Taxonomy" id="122586"/>
    <lineage>
        <taxon>Bacteria</taxon>
        <taxon>Pseudomonadati</taxon>
        <taxon>Pseudomonadota</taxon>
        <taxon>Betaproteobacteria</taxon>
        <taxon>Neisseriales</taxon>
        <taxon>Neisseriaceae</taxon>
        <taxon>Neisseria</taxon>
    </lineage>
</organism>
<proteinExistence type="inferred from homology"/>
<keyword id="KW-0972">Capsule biogenesis/degradation</keyword>
<keyword id="KW-0997">Cell inner membrane</keyword>
<keyword id="KW-1003">Cell membrane</keyword>
<keyword id="KW-0472">Membrane</keyword>
<keyword id="KW-0625">Polysaccharide transport</keyword>
<keyword id="KW-1185">Reference proteome</keyword>
<keyword id="KW-0762">Sugar transport</keyword>
<keyword id="KW-0812">Transmembrane</keyword>
<keyword id="KW-1133">Transmembrane helix</keyword>
<keyword id="KW-0813">Transport</keyword>
<feature type="chain" id="PRO_0000079498" description="Capsule polysaccharide export inner-membrane protein CtrB">
    <location>
        <begin position="1"/>
        <end position="387"/>
    </location>
</feature>
<feature type="transmembrane region" description="Helical" evidence="1">
    <location>
        <begin position="32"/>
        <end position="52"/>
    </location>
</feature>
<feature type="transmembrane region" description="Helical" evidence="1">
    <location>
        <begin position="358"/>
        <end position="378"/>
    </location>
</feature>
<comment type="function">
    <text>May form an ATP-driven capsule polysaccharide export apparatus, in association with the CtrC and CtrD proteins.</text>
</comment>
<comment type="subcellular location">
    <subcellularLocation>
        <location evidence="2">Cell inner membrane</location>
        <topology evidence="2">Multi-pass membrane protein</topology>
    </subcellularLocation>
</comment>
<comment type="similarity">
    <text evidence="2">Belongs to the BexC/CtrB/KpsE family.</text>
</comment>
<reference key="1">
    <citation type="journal article" date="1991" name="Mol. Microbiol.">
        <title>Evidence for a common molecular origin of the capsule gene loci in Gram-negative bacteria expressing group II capsular polysaccharides.</title>
        <authorList>
            <person name="Frosch M."/>
            <person name="Edwards U."/>
            <person name="Bousset K."/>
            <person name="Krausse B."/>
            <person name="Weisgerber C."/>
        </authorList>
    </citation>
    <scope>NUCLEOTIDE SEQUENCE [GENOMIC DNA]</scope>
    <source>
        <strain>B1940 / Serogroup B</strain>
    </source>
</reference>
<reference key="2">
    <citation type="journal article" date="2000" name="Science">
        <title>Complete genome sequence of Neisseria meningitidis serogroup B strain MC58.</title>
        <authorList>
            <person name="Tettelin H."/>
            <person name="Saunders N.J."/>
            <person name="Heidelberg J.F."/>
            <person name="Jeffries A.C."/>
            <person name="Nelson K.E."/>
            <person name="Eisen J.A."/>
            <person name="Ketchum K.A."/>
            <person name="Hood D.W."/>
            <person name="Peden J.F."/>
            <person name="Dodson R.J."/>
            <person name="Nelson W.C."/>
            <person name="Gwinn M.L."/>
            <person name="DeBoy R.T."/>
            <person name="Peterson J.D."/>
            <person name="Hickey E.K."/>
            <person name="Haft D.H."/>
            <person name="Salzberg S.L."/>
            <person name="White O."/>
            <person name="Fleischmann R.D."/>
            <person name="Dougherty B.A."/>
            <person name="Mason T.M."/>
            <person name="Ciecko A."/>
            <person name="Parksey D.S."/>
            <person name="Blair E."/>
            <person name="Cittone H."/>
            <person name="Clark E.B."/>
            <person name="Cotton M.D."/>
            <person name="Utterback T.R."/>
            <person name="Khouri H.M."/>
            <person name="Qin H."/>
            <person name="Vamathevan J.J."/>
            <person name="Gill J."/>
            <person name="Scarlato V."/>
            <person name="Masignani V."/>
            <person name="Pizza M."/>
            <person name="Grandi G."/>
            <person name="Sun L."/>
            <person name="Smith H.O."/>
            <person name="Fraser C.M."/>
            <person name="Moxon E.R."/>
            <person name="Rappuoli R."/>
            <person name="Venter J.C."/>
        </authorList>
    </citation>
    <scope>NUCLEOTIDE SEQUENCE [LARGE SCALE GENOMIC DNA]</scope>
    <source>
        <strain>ATCC BAA-335 / MC58</strain>
    </source>
</reference>